<comment type="similarity">
    <text evidence="1">Belongs to the bacterial ribosomal protein bL27 family.</text>
</comment>
<keyword id="KW-0687">Ribonucleoprotein</keyword>
<keyword id="KW-0689">Ribosomal protein</keyword>
<sequence length="87" mass="9648">MAHKKAGGSSRNGRDSQGQRRGVKRFGGQLVLAGNILIRQLGTKVHPGENVGMGRDYTLFAKVDGTVRYEKFTRKRKVLTRVHIDAV</sequence>
<feature type="chain" id="PRO_1000017468" description="Large ribosomal subunit protein bL27">
    <location>
        <begin position="1"/>
        <end position="87"/>
    </location>
</feature>
<feature type="region of interest" description="Disordered" evidence="2">
    <location>
        <begin position="1"/>
        <end position="22"/>
    </location>
</feature>
<gene>
    <name evidence="1" type="primary">rpmA</name>
    <name type="ordered locus">Dvul_2057</name>
</gene>
<protein>
    <recommendedName>
        <fullName evidence="1">Large ribosomal subunit protein bL27</fullName>
    </recommendedName>
    <alternativeName>
        <fullName evidence="3">50S ribosomal protein L27</fullName>
    </alternativeName>
</protein>
<organism>
    <name type="scientific">Nitratidesulfovibrio vulgaris (strain DP4)</name>
    <name type="common">Desulfovibrio vulgaris</name>
    <dbReference type="NCBI Taxonomy" id="391774"/>
    <lineage>
        <taxon>Bacteria</taxon>
        <taxon>Pseudomonadati</taxon>
        <taxon>Thermodesulfobacteriota</taxon>
        <taxon>Desulfovibrionia</taxon>
        <taxon>Desulfovibrionales</taxon>
        <taxon>Desulfovibrionaceae</taxon>
        <taxon>Nitratidesulfovibrio</taxon>
    </lineage>
</organism>
<proteinExistence type="inferred from homology"/>
<reference key="1">
    <citation type="journal article" date="2009" name="Environ. Microbiol.">
        <title>Contribution of mobile genetic elements to Desulfovibrio vulgaris genome plasticity.</title>
        <authorList>
            <person name="Walker C.B."/>
            <person name="Stolyar S."/>
            <person name="Chivian D."/>
            <person name="Pinel N."/>
            <person name="Gabster J.A."/>
            <person name="Dehal P.S."/>
            <person name="He Z."/>
            <person name="Yang Z.K."/>
            <person name="Yen H.C."/>
            <person name="Zhou J."/>
            <person name="Wall J.D."/>
            <person name="Hazen T.C."/>
            <person name="Arkin A.P."/>
            <person name="Stahl D.A."/>
        </authorList>
    </citation>
    <scope>NUCLEOTIDE SEQUENCE [LARGE SCALE GENOMIC DNA]</scope>
    <source>
        <strain>DP4</strain>
    </source>
</reference>
<evidence type="ECO:0000255" key="1">
    <source>
        <dbReference type="HAMAP-Rule" id="MF_00539"/>
    </source>
</evidence>
<evidence type="ECO:0000256" key="2">
    <source>
        <dbReference type="SAM" id="MobiDB-lite"/>
    </source>
</evidence>
<evidence type="ECO:0000305" key="3"/>
<accession>A1VF57</accession>
<name>RL27_NITV4</name>
<dbReference type="EMBL" id="CP000527">
    <property type="protein sequence ID" value="ABM29073.1"/>
    <property type="molecule type" value="Genomic_DNA"/>
</dbReference>
<dbReference type="RefSeq" id="WP_010938227.1">
    <property type="nucleotide sequence ID" value="NC_008751.1"/>
</dbReference>
<dbReference type="SMR" id="A1VF57"/>
<dbReference type="KEGG" id="dvl:Dvul_2057"/>
<dbReference type="HOGENOM" id="CLU_095424_4_0_7"/>
<dbReference type="Proteomes" id="UP000009173">
    <property type="component" value="Chromosome"/>
</dbReference>
<dbReference type="GO" id="GO:0022625">
    <property type="term" value="C:cytosolic large ribosomal subunit"/>
    <property type="evidence" value="ECO:0007669"/>
    <property type="project" value="TreeGrafter"/>
</dbReference>
<dbReference type="GO" id="GO:0003735">
    <property type="term" value="F:structural constituent of ribosome"/>
    <property type="evidence" value="ECO:0007669"/>
    <property type="project" value="InterPro"/>
</dbReference>
<dbReference type="GO" id="GO:0006412">
    <property type="term" value="P:translation"/>
    <property type="evidence" value="ECO:0007669"/>
    <property type="project" value="UniProtKB-UniRule"/>
</dbReference>
<dbReference type="FunFam" id="2.40.50.100:FF:000020">
    <property type="entry name" value="50S ribosomal protein L27"/>
    <property type="match status" value="1"/>
</dbReference>
<dbReference type="Gene3D" id="2.40.50.100">
    <property type="match status" value="1"/>
</dbReference>
<dbReference type="HAMAP" id="MF_00539">
    <property type="entry name" value="Ribosomal_bL27"/>
    <property type="match status" value="1"/>
</dbReference>
<dbReference type="InterPro" id="IPR001684">
    <property type="entry name" value="Ribosomal_bL27"/>
</dbReference>
<dbReference type="NCBIfam" id="TIGR00062">
    <property type="entry name" value="L27"/>
    <property type="match status" value="1"/>
</dbReference>
<dbReference type="PANTHER" id="PTHR15893:SF0">
    <property type="entry name" value="LARGE RIBOSOMAL SUBUNIT PROTEIN BL27M"/>
    <property type="match status" value="1"/>
</dbReference>
<dbReference type="PANTHER" id="PTHR15893">
    <property type="entry name" value="RIBOSOMAL PROTEIN L27"/>
    <property type="match status" value="1"/>
</dbReference>
<dbReference type="Pfam" id="PF01016">
    <property type="entry name" value="Ribosomal_L27"/>
    <property type="match status" value="1"/>
</dbReference>
<dbReference type="PRINTS" id="PR00063">
    <property type="entry name" value="RIBOSOMALL27"/>
</dbReference>
<dbReference type="SUPFAM" id="SSF110324">
    <property type="entry name" value="Ribosomal L27 protein-like"/>
    <property type="match status" value="1"/>
</dbReference>